<reference key="1">
    <citation type="journal article" date="2006" name="Genome Biol.">
        <title>Genomic analysis reveals that Pseudomonas aeruginosa virulence is combinatorial.</title>
        <authorList>
            <person name="Lee D.G."/>
            <person name="Urbach J.M."/>
            <person name="Wu G."/>
            <person name="Liberati N.T."/>
            <person name="Feinbaum R.L."/>
            <person name="Miyata S."/>
            <person name="Diggins L.T."/>
            <person name="He J."/>
            <person name="Saucier M."/>
            <person name="Deziel E."/>
            <person name="Friedman L."/>
            <person name="Li L."/>
            <person name="Grills G."/>
            <person name="Montgomery K."/>
            <person name="Kucherlapati R."/>
            <person name="Rahme L.G."/>
            <person name="Ausubel F.M."/>
        </authorList>
    </citation>
    <scope>NUCLEOTIDE SEQUENCE [LARGE SCALE GENOMIC DNA]</scope>
    <source>
        <strain>UCBPP-PA14</strain>
    </source>
</reference>
<gene>
    <name evidence="1" type="primary">ccmE</name>
    <name evidence="1" type="synonym">cycJ</name>
    <name type="ordered locus">PA14_45330</name>
</gene>
<evidence type="ECO:0000255" key="1">
    <source>
        <dbReference type="HAMAP-Rule" id="MF_01959"/>
    </source>
</evidence>
<evidence type="ECO:0000256" key="2">
    <source>
        <dbReference type="SAM" id="MobiDB-lite"/>
    </source>
</evidence>
<sequence>MNPVRKKRLIIVLAIVVGVGAAVGLALSALQQNINLFYTPTQIANGEAPTDTRIRAGGLVEKGSLQRSEDSLNVRFVVTDGAKEVTIAYHGILPDLFREGQGIVALGKLGGDGVLVADEVLAKHDENYMPPEVTKALKDSGQLKHYENGKAAGETSYNQEGK</sequence>
<comment type="function">
    <text evidence="1">Heme chaperone required for the biogenesis of c-type cytochromes. Transiently binds heme delivered by CcmC and transfers the heme to apo-cytochromes in a process facilitated by CcmF and CcmH.</text>
</comment>
<comment type="subcellular location">
    <subcellularLocation>
        <location evidence="1">Cell inner membrane</location>
        <topology evidence="1">Single-pass type II membrane protein</topology>
        <orientation evidence="1">Periplasmic side</orientation>
    </subcellularLocation>
</comment>
<comment type="similarity">
    <text evidence="1">Belongs to the CcmE/CycJ family.</text>
</comment>
<name>CCME_PSEAB</name>
<accession>Q02JW1</accession>
<protein>
    <recommendedName>
        <fullName evidence="1">Cytochrome c-type biogenesis protein CcmE</fullName>
    </recommendedName>
    <alternativeName>
        <fullName evidence="1">Cytochrome c maturation protein E</fullName>
    </alternativeName>
    <alternativeName>
        <fullName evidence="1">Heme chaperone CcmE</fullName>
    </alternativeName>
</protein>
<feature type="chain" id="PRO_1000070831" description="Cytochrome c-type biogenesis protein CcmE">
    <location>
        <begin position="1"/>
        <end position="162"/>
    </location>
</feature>
<feature type="topological domain" description="Cytoplasmic" evidence="1">
    <location>
        <begin position="1"/>
        <end position="8"/>
    </location>
</feature>
<feature type="transmembrane region" description="Helical; Signal-anchor for type II membrane protein" evidence="1">
    <location>
        <begin position="9"/>
        <end position="29"/>
    </location>
</feature>
<feature type="topological domain" description="Periplasmic" evidence="1">
    <location>
        <begin position="30"/>
        <end position="162"/>
    </location>
</feature>
<feature type="region of interest" description="Disordered" evidence="2">
    <location>
        <begin position="139"/>
        <end position="162"/>
    </location>
</feature>
<feature type="compositionally biased region" description="Basic and acidic residues" evidence="2">
    <location>
        <begin position="139"/>
        <end position="148"/>
    </location>
</feature>
<feature type="binding site" description="covalent" evidence="1">
    <location>
        <position position="124"/>
    </location>
    <ligand>
        <name>heme</name>
        <dbReference type="ChEBI" id="CHEBI:30413"/>
    </ligand>
</feature>
<feature type="binding site" description="axial binding residue" evidence="1">
    <location>
        <position position="128"/>
    </location>
    <ligand>
        <name>heme</name>
        <dbReference type="ChEBI" id="CHEBI:30413"/>
    </ligand>
    <ligandPart>
        <name>Fe</name>
        <dbReference type="ChEBI" id="CHEBI:18248"/>
    </ligandPart>
</feature>
<dbReference type="EMBL" id="CP000438">
    <property type="protein sequence ID" value="ABJ10658.1"/>
    <property type="molecule type" value="Genomic_DNA"/>
</dbReference>
<dbReference type="RefSeq" id="WP_003083137.1">
    <property type="nucleotide sequence ID" value="NZ_CP034244.1"/>
</dbReference>
<dbReference type="SMR" id="Q02JW1"/>
<dbReference type="KEGG" id="pau:PA14_45330"/>
<dbReference type="PseudoCAP" id="PA14_45330"/>
<dbReference type="HOGENOM" id="CLU_079503_1_1_6"/>
<dbReference type="BioCyc" id="PAER208963:G1G74-3805-MONOMER"/>
<dbReference type="Proteomes" id="UP000000653">
    <property type="component" value="Chromosome"/>
</dbReference>
<dbReference type="GO" id="GO:0005886">
    <property type="term" value="C:plasma membrane"/>
    <property type="evidence" value="ECO:0007669"/>
    <property type="project" value="UniProtKB-SubCell"/>
</dbReference>
<dbReference type="GO" id="GO:0020037">
    <property type="term" value="F:heme binding"/>
    <property type="evidence" value="ECO:0007669"/>
    <property type="project" value="InterPro"/>
</dbReference>
<dbReference type="GO" id="GO:0046872">
    <property type="term" value="F:metal ion binding"/>
    <property type="evidence" value="ECO:0007669"/>
    <property type="project" value="UniProtKB-KW"/>
</dbReference>
<dbReference type="GO" id="GO:0017004">
    <property type="term" value="P:cytochrome complex assembly"/>
    <property type="evidence" value="ECO:0007669"/>
    <property type="project" value="UniProtKB-KW"/>
</dbReference>
<dbReference type="FunFam" id="2.40.50.140:FF:000104">
    <property type="entry name" value="Cytochrome c-type biogenesis protein CcmE"/>
    <property type="match status" value="1"/>
</dbReference>
<dbReference type="Gene3D" id="2.40.50.140">
    <property type="entry name" value="Nucleic acid-binding proteins"/>
    <property type="match status" value="1"/>
</dbReference>
<dbReference type="HAMAP" id="MF_01959">
    <property type="entry name" value="CcmE"/>
    <property type="match status" value="1"/>
</dbReference>
<dbReference type="InterPro" id="IPR004329">
    <property type="entry name" value="CcmE"/>
</dbReference>
<dbReference type="InterPro" id="IPR036127">
    <property type="entry name" value="CcmE-like_sf"/>
</dbReference>
<dbReference type="InterPro" id="IPR012340">
    <property type="entry name" value="NA-bd_OB-fold"/>
</dbReference>
<dbReference type="NCBIfam" id="NF009727">
    <property type="entry name" value="PRK13254.1-1"/>
    <property type="match status" value="1"/>
</dbReference>
<dbReference type="NCBIfam" id="NF009729">
    <property type="entry name" value="PRK13254.1-3"/>
    <property type="match status" value="1"/>
</dbReference>
<dbReference type="NCBIfam" id="NF009731">
    <property type="entry name" value="PRK13254.1-5"/>
    <property type="match status" value="1"/>
</dbReference>
<dbReference type="PANTHER" id="PTHR34128">
    <property type="entry name" value="CYTOCHROME C-TYPE BIOGENESIS PROTEIN CCME HOMOLOG, MITOCHONDRIAL"/>
    <property type="match status" value="1"/>
</dbReference>
<dbReference type="PANTHER" id="PTHR34128:SF2">
    <property type="entry name" value="CYTOCHROME C-TYPE BIOGENESIS PROTEIN CCME HOMOLOG, MITOCHONDRIAL"/>
    <property type="match status" value="1"/>
</dbReference>
<dbReference type="Pfam" id="PF03100">
    <property type="entry name" value="CcmE"/>
    <property type="match status" value="1"/>
</dbReference>
<dbReference type="SUPFAM" id="SSF82093">
    <property type="entry name" value="Heme chaperone CcmE"/>
    <property type="match status" value="1"/>
</dbReference>
<organism>
    <name type="scientific">Pseudomonas aeruginosa (strain UCBPP-PA14)</name>
    <dbReference type="NCBI Taxonomy" id="208963"/>
    <lineage>
        <taxon>Bacteria</taxon>
        <taxon>Pseudomonadati</taxon>
        <taxon>Pseudomonadota</taxon>
        <taxon>Gammaproteobacteria</taxon>
        <taxon>Pseudomonadales</taxon>
        <taxon>Pseudomonadaceae</taxon>
        <taxon>Pseudomonas</taxon>
    </lineage>
</organism>
<proteinExistence type="inferred from homology"/>
<keyword id="KW-0997">Cell inner membrane</keyword>
<keyword id="KW-1003">Cell membrane</keyword>
<keyword id="KW-0201">Cytochrome c-type biogenesis</keyword>
<keyword id="KW-0349">Heme</keyword>
<keyword id="KW-0408">Iron</keyword>
<keyword id="KW-0472">Membrane</keyword>
<keyword id="KW-0479">Metal-binding</keyword>
<keyword id="KW-0735">Signal-anchor</keyword>
<keyword id="KW-0812">Transmembrane</keyword>
<keyword id="KW-1133">Transmembrane helix</keyword>